<feature type="chain" id="PRO_1000057896" description="Bifunctional purine biosynthesis protein PurH">
    <location>
        <begin position="1"/>
        <end position="521"/>
    </location>
</feature>
<feature type="domain" description="MGS-like" evidence="2">
    <location>
        <begin position="1"/>
        <end position="147"/>
    </location>
</feature>
<reference key="1">
    <citation type="journal article" date="2009" name="BMC Microbiol.">
        <title>The genome sequence of Geobacter metallireducens: features of metabolism, physiology and regulation common and dissimilar to Geobacter sulfurreducens.</title>
        <authorList>
            <person name="Aklujkar M."/>
            <person name="Krushkal J."/>
            <person name="DiBartolo G."/>
            <person name="Lapidus A."/>
            <person name="Land M.L."/>
            <person name="Lovley D.R."/>
        </authorList>
    </citation>
    <scope>NUCLEOTIDE SEQUENCE [LARGE SCALE GENOMIC DNA]</scope>
    <source>
        <strain>ATCC 53774 / DSM 7210 / GS-15</strain>
    </source>
</reference>
<dbReference type="EC" id="2.1.2.3" evidence="1"/>
<dbReference type="EC" id="3.5.4.10" evidence="1"/>
<dbReference type="EMBL" id="CP000148">
    <property type="protein sequence ID" value="ABB33123.1"/>
    <property type="molecule type" value="Genomic_DNA"/>
</dbReference>
<dbReference type="RefSeq" id="WP_004512841.1">
    <property type="nucleotide sequence ID" value="NC_007517.1"/>
</dbReference>
<dbReference type="SMR" id="Q39RK1"/>
<dbReference type="STRING" id="269799.Gmet_2905"/>
<dbReference type="KEGG" id="gme:Gmet_2905"/>
<dbReference type="eggNOG" id="COG0138">
    <property type="taxonomic scope" value="Bacteria"/>
</dbReference>
<dbReference type="HOGENOM" id="CLU_016316_5_2_7"/>
<dbReference type="UniPathway" id="UPA00074">
    <property type="reaction ID" value="UER00133"/>
</dbReference>
<dbReference type="UniPathway" id="UPA00074">
    <property type="reaction ID" value="UER00135"/>
</dbReference>
<dbReference type="Proteomes" id="UP000007073">
    <property type="component" value="Chromosome"/>
</dbReference>
<dbReference type="GO" id="GO:0005829">
    <property type="term" value="C:cytosol"/>
    <property type="evidence" value="ECO:0007669"/>
    <property type="project" value="TreeGrafter"/>
</dbReference>
<dbReference type="GO" id="GO:0003937">
    <property type="term" value="F:IMP cyclohydrolase activity"/>
    <property type="evidence" value="ECO:0007669"/>
    <property type="project" value="UniProtKB-UniRule"/>
</dbReference>
<dbReference type="GO" id="GO:0004643">
    <property type="term" value="F:phosphoribosylaminoimidazolecarboxamide formyltransferase activity"/>
    <property type="evidence" value="ECO:0007669"/>
    <property type="project" value="UniProtKB-UniRule"/>
</dbReference>
<dbReference type="GO" id="GO:0006189">
    <property type="term" value="P:'de novo' IMP biosynthetic process"/>
    <property type="evidence" value="ECO:0007669"/>
    <property type="project" value="UniProtKB-UniRule"/>
</dbReference>
<dbReference type="CDD" id="cd01421">
    <property type="entry name" value="IMPCH"/>
    <property type="match status" value="1"/>
</dbReference>
<dbReference type="FunFam" id="3.40.140.20:FF:000001">
    <property type="entry name" value="Bifunctional purine biosynthesis protein PurH"/>
    <property type="match status" value="1"/>
</dbReference>
<dbReference type="FunFam" id="3.40.140.20:FF:000002">
    <property type="entry name" value="Bifunctional purine biosynthesis protein PurH"/>
    <property type="match status" value="1"/>
</dbReference>
<dbReference type="FunFam" id="3.40.50.1380:FF:000001">
    <property type="entry name" value="Bifunctional purine biosynthesis protein PurH"/>
    <property type="match status" value="1"/>
</dbReference>
<dbReference type="Gene3D" id="3.40.140.20">
    <property type="match status" value="2"/>
</dbReference>
<dbReference type="Gene3D" id="3.40.50.1380">
    <property type="entry name" value="Methylglyoxal synthase-like domain"/>
    <property type="match status" value="1"/>
</dbReference>
<dbReference type="HAMAP" id="MF_00139">
    <property type="entry name" value="PurH"/>
    <property type="match status" value="1"/>
</dbReference>
<dbReference type="InterPro" id="IPR024051">
    <property type="entry name" value="AICAR_Tfase_dup_dom_sf"/>
</dbReference>
<dbReference type="InterPro" id="IPR016193">
    <property type="entry name" value="Cytidine_deaminase-like"/>
</dbReference>
<dbReference type="InterPro" id="IPR011607">
    <property type="entry name" value="MGS-like_dom"/>
</dbReference>
<dbReference type="InterPro" id="IPR036914">
    <property type="entry name" value="MGS-like_dom_sf"/>
</dbReference>
<dbReference type="InterPro" id="IPR002695">
    <property type="entry name" value="PurH-like"/>
</dbReference>
<dbReference type="NCBIfam" id="NF002049">
    <property type="entry name" value="PRK00881.1"/>
    <property type="match status" value="1"/>
</dbReference>
<dbReference type="NCBIfam" id="TIGR00355">
    <property type="entry name" value="purH"/>
    <property type="match status" value="1"/>
</dbReference>
<dbReference type="PANTHER" id="PTHR11692:SF0">
    <property type="entry name" value="BIFUNCTIONAL PURINE BIOSYNTHESIS PROTEIN ATIC"/>
    <property type="match status" value="1"/>
</dbReference>
<dbReference type="PANTHER" id="PTHR11692">
    <property type="entry name" value="BIFUNCTIONAL PURINE BIOSYNTHESIS PROTEIN PURH"/>
    <property type="match status" value="1"/>
</dbReference>
<dbReference type="Pfam" id="PF01808">
    <property type="entry name" value="AICARFT_IMPCHas"/>
    <property type="match status" value="1"/>
</dbReference>
<dbReference type="Pfam" id="PF02142">
    <property type="entry name" value="MGS"/>
    <property type="match status" value="1"/>
</dbReference>
<dbReference type="PIRSF" id="PIRSF000414">
    <property type="entry name" value="AICARFT_IMPCHas"/>
    <property type="match status" value="1"/>
</dbReference>
<dbReference type="SMART" id="SM00798">
    <property type="entry name" value="AICARFT_IMPCHas"/>
    <property type="match status" value="1"/>
</dbReference>
<dbReference type="SMART" id="SM00851">
    <property type="entry name" value="MGS"/>
    <property type="match status" value="1"/>
</dbReference>
<dbReference type="SUPFAM" id="SSF53927">
    <property type="entry name" value="Cytidine deaminase-like"/>
    <property type="match status" value="1"/>
</dbReference>
<dbReference type="SUPFAM" id="SSF52335">
    <property type="entry name" value="Methylglyoxal synthase-like"/>
    <property type="match status" value="1"/>
</dbReference>
<dbReference type="PROSITE" id="PS51855">
    <property type="entry name" value="MGS"/>
    <property type="match status" value="1"/>
</dbReference>
<protein>
    <recommendedName>
        <fullName evidence="1">Bifunctional purine biosynthesis protein PurH</fullName>
    </recommendedName>
    <domain>
        <recommendedName>
            <fullName evidence="1">Phosphoribosylaminoimidazolecarboxamide formyltransferase</fullName>
            <ecNumber evidence="1">2.1.2.3</ecNumber>
        </recommendedName>
        <alternativeName>
            <fullName evidence="1">AICAR transformylase</fullName>
        </alternativeName>
    </domain>
    <domain>
        <recommendedName>
            <fullName evidence="1">IMP cyclohydrolase</fullName>
            <ecNumber evidence="1">3.5.4.10</ecNumber>
        </recommendedName>
        <alternativeName>
            <fullName evidence="1">ATIC</fullName>
        </alternativeName>
        <alternativeName>
            <fullName evidence="1">IMP synthase</fullName>
        </alternativeName>
        <alternativeName>
            <fullName evidence="1">Inosinicase</fullName>
        </alternativeName>
    </domain>
</protein>
<sequence>MAKITRALISLSDKTGIVEFARELAGYGVEILSTGGTAKLLRDAGLTVKDVSEHTGFPEMLDGRVKTLHPKVHGGLLGMRSNPEHVATMKEHGILPIDMVVVNLYPFEATVANPACTLEDAIENIDIGGPTMLRSAAKNNADVTVVVDPADYRTVLDEMKASGGSVAKETNFRLAVKVYQHTAAYDGAISNWLGARTGEGVATYSDTITLQFKKAQEMRYGENPHQSAAFYVERQVQEASVSTARQLQGKELSYNNIGDTDAALECVKQFSEGPACVIVKHANPCGVAIGKNLLEAYDRAYATDPESAFGGIIAFNGELDAETAKAICDRQFVEVIIAPSVSKAAVEVVAAKKNVRLLECGIWPAQPAQRLDFKRVNGGLLVQDTDLALSAELKVVSKRQPTAQEMIDLQFAWRVAKFVKSNAIVYGKDGMTIGVGAGQMSRVNSARIAAIKAEHAGLEVQGAVMASDAFFPFRDGIDNAAAVGITAVIQPGGSMRDAEVIAAADEHGMAMVFTGMRHFRH</sequence>
<proteinExistence type="inferred from homology"/>
<organism>
    <name type="scientific">Geobacter metallireducens (strain ATCC 53774 / DSM 7210 / GS-15)</name>
    <dbReference type="NCBI Taxonomy" id="269799"/>
    <lineage>
        <taxon>Bacteria</taxon>
        <taxon>Pseudomonadati</taxon>
        <taxon>Thermodesulfobacteriota</taxon>
        <taxon>Desulfuromonadia</taxon>
        <taxon>Geobacterales</taxon>
        <taxon>Geobacteraceae</taxon>
        <taxon>Geobacter</taxon>
    </lineage>
</organism>
<comment type="catalytic activity">
    <reaction evidence="1">
        <text>(6R)-10-formyltetrahydrofolate + 5-amino-1-(5-phospho-beta-D-ribosyl)imidazole-4-carboxamide = 5-formamido-1-(5-phospho-D-ribosyl)imidazole-4-carboxamide + (6S)-5,6,7,8-tetrahydrofolate</text>
        <dbReference type="Rhea" id="RHEA:22192"/>
        <dbReference type="ChEBI" id="CHEBI:57453"/>
        <dbReference type="ChEBI" id="CHEBI:58467"/>
        <dbReference type="ChEBI" id="CHEBI:58475"/>
        <dbReference type="ChEBI" id="CHEBI:195366"/>
        <dbReference type="EC" id="2.1.2.3"/>
    </reaction>
</comment>
<comment type="catalytic activity">
    <reaction evidence="1">
        <text>IMP + H2O = 5-formamido-1-(5-phospho-D-ribosyl)imidazole-4-carboxamide</text>
        <dbReference type="Rhea" id="RHEA:18445"/>
        <dbReference type="ChEBI" id="CHEBI:15377"/>
        <dbReference type="ChEBI" id="CHEBI:58053"/>
        <dbReference type="ChEBI" id="CHEBI:58467"/>
        <dbReference type="EC" id="3.5.4.10"/>
    </reaction>
</comment>
<comment type="pathway">
    <text evidence="1">Purine metabolism; IMP biosynthesis via de novo pathway; 5-formamido-1-(5-phospho-D-ribosyl)imidazole-4-carboxamide from 5-amino-1-(5-phospho-D-ribosyl)imidazole-4-carboxamide (10-formyl THF route): step 1/1.</text>
</comment>
<comment type="pathway">
    <text evidence="1">Purine metabolism; IMP biosynthesis via de novo pathway; IMP from 5-formamido-1-(5-phospho-D-ribosyl)imidazole-4-carboxamide: step 1/1.</text>
</comment>
<comment type="domain">
    <text evidence="1">The IMP cyclohydrolase activity resides in the N-terminal region.</text>
</comment>
<comment type="similarity">
    <text evidence="1">Belongs to the PurH family.</text>
</comment>
<name>PUR9_GEOMG</name>
<accession>Q39RK1</accession>
<evidence type="ECO:0000255" key="1">
    <source>
        <dbReference type="HAMAP-Rule" id="MF_00139"/>
    </source>
</evidence>
<evidence type="ECO:0000255" key="2">
    <source>
        <dbReference type="PROSITE-ProRule" id="PRU01202"/>
    </source>
</evidence>
<keyword id="KW-0378">Hydrolase</keyword>
<keyword id="KW-0511">Multifunctional enzyme</keyword>
<keyword id="KW-0658">Purine biosynthesis</keyword>
<keyword id="KW-1185">Reference proteome</keyword>
<keyword id="KW-0808">Transferase</keyword>
<gene>
    <name evidence="1" type="primary">purH</name>
    <name type="ordered locus">Gmet_2905</name>
</gene>